<evidence type="ECO:0000250" key="1"/>
<evidence type="ECO:0000255" key="2">
    <source>
        <dbReference type="HAMAP-Rule" id="MF_00403"/>
    </source>
</evidence>
<evidence type="ECO:0000305" key="3"/>
<reference key="1">
    <citation type="journal article" date="2006" name="PLoS Biol.">
        <title>The genome of deep-sea vent chemolithoautotroph Thiomicrospira crunogena XCL-2.</title>
        <authorList>
            <person name="Scott K.M."/>
            <person name="Sievert S.M."/>
            <person name="Abril F.N."/>
            <person name="Ball L.A."/>
            <person name="Barrett C.J."/>
            <person name="Blake R.A."/>
            <person name="Boller A.J."/>
            <person name="Chain P.S.G."/>
            <person name="Clark J.A."/>
            <person name="Davis C.R."/>
            <person name="Detter C."/>
            <person name="Do K.F."/>
            <person name="Dobrinski K.P."/>
            <person name="Faza B.I."/>
            <person name="Fitzpatrick K.A."/>
            <person name="Freyermuth S.K."/>
            <person name="Harmer T.L."/>
            <person name="Hauser L.J."/>
            <person name="Huegler M."/>
            <person name="Kerfeld C.A."/>
            <person name="Klotz M.G."/>
            <person name="Kong W.W."/>
            <person name="Land M."/>
            <person name="Lapidus A."/>
            <person name="Larimer F.W."/>
            <person name="Longo D.L."/>
            <person name="Lucas S."/>
            <person name="Malfatti S.A."/>
            <person name="Massey S.E."/>
            <person name="Martin D.D."/>
            <person name="McCuddin Z."/>
            <person name="Meyer F."/>
            <person name="Moore J.L."/>
            <person name="Ocampo L.H. Jr."/>
            <person name="Paul J.H."/>
            <person name="Paulsen I.T."/>
            <person name="Reep D.K."/>
            <person name="Ren Q."/>
            <person name="Ross R.L."/>
            <person name="Sato P.Y."/>
            <person name="Thomas P."/>
            <person name="Tinkham L.E."/>
            <person name="Zeruth G.T."/>
        </authorList>
    </citation>
    <scope>NUCLEOTIDE SEQUENCE [LARGE SCALE GENOMIC DNA]</scope>
    <source>
        <strain>DSM 25203 / XCL-2</strain>
    </source>
</reference>
<accession>Q31IY7</accession>
<proteinExistence type="inferred from homology"/>
<dbReference type="EMBL" id="CP000109">
    <property type="protein sequence ID" value="ABB40886.1"/>
    <property type="molecule type" value="Genomic_DNA"/>
</dbReference>
<dbReference type="SMR" id="Q31IY7"/>
<dbReference type="STRING" id="317025.Tcr_0290"/>
<dbReference type="KEGG" id="tcx:Tcr_0290"/>
<dbReference type="eggNOG" id="COG0048">
    <property type="taxonomic scope" value="Bacteria"/>
</dbReference>
<dbReference type="HOGENOM" id="CLU_104295_1_2_6"/>
<dbReference type="OrthoDB" id="9802366at2"/>
<dbReference type="GO" id="GO:0015935">
    <property type="term" value="C:small ribosomal subunit"/>
    <property type="evidence" value="ECO:0007669"/>
    <property type="project" value="InterPro"/>
</dbReference>
<dbReference type="GO" id="GO:0019843">
    <property type="term" value="F:rRNA binding"/>
    <property type="evidence" value="ECO:0007669"/>
    <property type="project" value="UniProtKB-UniRule"/>
</dbReference>
<dbReference type="GO" id="GO:0003735">
    <property type="term" value="F:structural constituent of ribosome"/>
    <property type="evidence" value="ECO:0007669"/>
    <property type="project" value="InterPro"/>
</dbReference>
<dbReference type="GO" id="GO:0000049">
    <property type="term" value="F:tRNA binding"/>
    <property type="evidence" value="ECO:0007669"/>
    <property type="project" value="UniProtKB-UniRule"/>
</dbReference>
<dbReference type="GO" id="GO:0006412">
    <property type="term" value="P:translation"/>
    <property type="evidence" value="ECO:0007669"/>
    <property type="project" value="UniProtKB-UniRule"/>
</dbReference>
<dbReference type="CDD" id="cd03368">
    <property type="entry name" value="Ribosomal_S12"/>
    <property type="match status" value="1"/>
</dbReference>
<dbReference type="FunFam" id="2.40.50.140:FF:000001">
    <property type="entry name" value="30S ribosomal protein S12"/>
    <property type="match status" value="1"/>
</dbReference>
<dbReference type="Gene3D" id="2.40.50.140">
    <property type="entry name" value="Nucleic acid-binding proteins"/>
    <property type="match status" value="1"/>
</dbReference>
<dbReference type="HAMAP" id="MF_00403_B">
    <property type="entry name" value="Ribosomal_uS12_B"/>
    <property type="match status" value="1"/>
</dbReference>
<dbReference type="InterPro" id="IPR012340">
    <property type="entry name" value="NA-bd_OB-fold"/>
</dbReference>
<dbReference type="InterPro" id="IPR006032">
    <property type="entry name" value="Ribosomal_uS12"/>
</dbReference>
<dbReference type="InterPro" id="IPR005679">
    <property type="entry name" value="Ribosomal_uS12_bac"/>
</dbReference>
<dbReference type="NCBIfam" id="TIGR00981">
    <property type="entry name" value="rpsL_bact"/>
    <property type="match status" value="1"/>
</dbReference>
<dbReference type="PANTHER" id="PTHR11652">
    <property type="entry name" value="30S RIBOSOMAL PROTEIN S12 FAMILY MEMBER"/>
    <property type="match status" value="1"/>
</dbReference>
<dbReference type="Pfam" id="PF00164">
    <property type="entry name" value="Ribosom_S12_S23"/>
    <property type="match status" value="1"/>
</dbReference>
<dbReference type="PIRSF" id="PIRSF002133">
    <property type="entry name" value="Ribosomal_S12/S23"/>
    <property type="match status" value="1"/>
</dbReference>
<dbReference type="PRINTS" id="PR01034">
    <property type="entry name" value="RIBOSOMALS12"/>
</dbReference>
<dbReference type="SUPFAM" id="SSF50249">
    <property type="entry name" value="Nucleic acid-binding proteins"/>
    <property type="match status" value="1"/>
</dbReference>
<dbReference type="PROSITE" id="PS00055">
    <property type="entry name" value="RIBOSOMAL_S12"/>
    <property type="match status" value="1"/>
</dbReference>
<feature type="chain" id="PRO_0000238150" description="Small ribosomal subunit protein uS12">
    <location>
        <begin position="1"/>
        <end position="124"/>
    </location>
</feature>
<feature type="modified residue" description="3-methylthioaspartic acid" evidence="1">
    <location>
        <position position="89"/>
    </location>
</feature>
<comment type="function">
    <text evidence="2">With S4 and S5 plays an important role in translational accuracy.</text>
</comment>
<comment type="function">
    <text evidence="2">Interacts with and stabilizes bases of the 16S rRNA that are involved in tRNA selection in the A site and with the mRNA backbone. Located at the interface of the 30S and 50S subunits, it traverses the body of the 30S subunit contacting proteins on the other side and probably holding the rRNA structure together. The combined cluster of proteins S8, S12 and S17 appears to hold together the shoulder and platform of the 30S subunit.</text>
</comment>
<comment type="subunit">
    <text evidence="2">Part of the 30S ribosomal subunit. Contacts proteins S8 and S17. May interact with IF1 in the 30S initiation complex.</text>
</comment>
<comment type="similarity">
    <text evidence="2">Belongs to the universal ribosomal protein uS12 family.</text>
</comment>
<name>RS12_HYDCU</name>
<gene>
    <name evidence="2" type="primary">rpsL</name>
    <name type="ordered locus">Tcr_0290</name>
</gene>
<keyword id="KW-0488">Methylation</keyword>
<keyword id="KW-0687">Ribonucleoprotein</keyword>
<keyword id="KW-0689">Ribosomal protein</keyword>
<keyword id="KW-0694">RNA-binding</keyword>
<keyword id="KW-0699">rRNA-binding</keyword>
<keyword id="KW-0820">tRNA-binding</keyword>
<organism>
    <name type="scientific">Hydrogenovibrio crunogenus (strain DSM 25203 / XCL-2)</name>
    <name type="common">Thiomicrospira crunogena</name>
    <dbReference type="NCBI Taxonomy" id="317025"/>
    <lineage>
        <taxon>Bacteria</taxon>
        <taxon>Pseudomonadati</taxon>
        <taxon>Pseudomonadota</taxon>
        <taxon>Gammaproteobacteria</taxon>
        <taxon>Thiotrichales</taxon>
        <taxon>Piscirickettsiaceae</taxon>
        <taxon>Hydrogenovibrio</taxon>
    </lineage>
</organism>
<protein>
    <recommendedName>
        <fullName evidence="2">Small ribosomal subunit protein uS12</fullName>
    </recommendedName>
    <alternativeName>
        <fullName evidence="3">30S ribosomal protein S12</fullName>
    </alternativeName>
</protein>
<sequence length="124" mass="13727">MATINQLVRKPRKDKMKKSNVPALEACPQRRGVCTRVYTTTPKKPNSALRKVARVRLTNGYEVSSYIGGEGHNLQEHSVILIRGGRVKDLPGVRYHTVRGSLDCAGVDGRKQGRSKYGAKRPKG</sequence>